<accession>A5D6B2</accession>
<organism>
    <name type="scientific">Pelotomaculum thermopropionicum (strain DSM 13744 / JCM 10971 / SI)</name>
    <dbReference type="NCBI Taxonomy" id="370438"/>
    <lineage>
        <taxon>Bacteria</taxon>
        <taxon>Bacillati</taxon>
        <taxon>Bacillota</taxon>
        <taxon>Clostridia</taxon>
        <taxon>Eubacteriales</taxon>
        <taxon>Desulfotomaculaceae</taxon>
        <taxon>Pelotomaculum</taxon>
    </lineage>
</organism>
<keyword id="KW-0963">Cytoplasm</keyword>
<keyword id="KW-0238">DNA-binding</keyword>
<keyword id="KW-1185">Reference proteome</keyword>
<feature type="chain" id="PRO_1000078764" description="Nucleoid-associated protein PTH_0052">
    <location>
        <begin position="1"/>
        <end position="105"/>
    </location>
</feature>
<comment type="function">
    <text evidence="1">Binds to DNA and alters its conformation. May be involved in regulation of gene expression, nucleoid organization and DNA protection.</text>
</comment>
<comment type="subunit">
    <text evidence="1">Homodimer.</text>
</comment>
<comment type="subcellular location">
    <subcellularLocation>
        <location evidence="1">Cytoplasm</location>
        <location evidence="1">Nucleoid</location>
    </subcellularLocation>
</comment>
<comment type="similarity">
    <text evidence="1">Belongs to the YbaB/EbfC family.</text>
</comment>
<reference key="1">
    <citation type="journal article" date="2008" name="Genome Res.">
        <title>The genome of Pelotomaculum thermopropionicum reveals niche-associated evolution in anaerobic microbiota.</title>
        <authorList>
            <person name="Kosaka T."/>
            <person name="Kato S."/>
            <person name="Shimoyama T."/>
            <person name="Ishii S."/>
            <person name="Abe T."/>
            <person name="Watanabe K."/>
        </authorList>
    </citation>
    <scope>NUCLEOTIDE SEQUENCE [LARGE SCALE GENOMIC DNA]</scope>
    <source>
        <strain>DSM 13744 / JCM 10971 / SI</strain>
    </source>
</reference>
<sequence length="105" mass="11520">MMGGNMSKMMKQVQKMQQDMLRLQEELGNRTVESTAGGGAVKVVANGRNEIVSIEIKPEALDPEDVEMLQDMILAAVNEALKKAQDMISQEMGRLTGNLKIPGLF</sequence>
<proteinExistence type="inferred from homology"/>
<evidence type="ECO:0000255" key="1">
    <source>
        <dbReference type="HAMAP-Rule" id="MF_00274"/>
    </source>
</evidence>
<dbReference type="EMBL" id="AP009389">
    <property type="protein sequence ID" value="BAF58233.1"/>
    <property type="molecule type" value="Genomic_DNA"/>
</dbReference>
<dbReference type="SMR" id="A5D6B2"/>
<dbReference type="STRING" id="370438.PTH_0052"/>
<dbReference type="KEGG" id="pth:PTH_0052"/>
<dbReference type="eggNOG" id="COG0718">
    <property type="taxonomic scope" value="Bacteria"/>
</dbReference>
<dbReference type="HOGENOM" id="CLU_140930_1_0_9"/>
<dbReference type="Proteomes" id="UP000006556">
    <property type="component" value="Chromosome"/>
</dbReference>
<dbReference type="GO" id="GO:0043590">
    <property type="term" value="C:bacterial nucleoid"/>
    <property type="evidence" value="ECO:0007669"/>
    <property type="project" value="UniProtKB-UniRule"/>
</dbReference>
<dbReference type="GO" id="GO:0005829">
    <property type="term" value="C:cytosol"/>
    <property type="evidence" value="ECO:0007669"/>
    <property type="project" value="TreeGrafter"/>
</dbReference>
<dbReference type="GO" id="GO:0003677">
    <property type="term" value="F:DNA binding"/>
    <property type="evidence" value="ECO:0007669"/>
    <property type="project" value="UniProtKB-UniRule"/>
</dbReference>
<dbReference type="FunFam" id="3.30.1310.10:FF:000002">
    <property type="entry name" value="Nucleoid-associated protein IKC_06587"/>
    <property type="match status" value="1"/>
</dbReference>
<dbReference type="Gene3D" id="3.30.1310.10">
    <property type="entry name" value="Nucleoid-associated protein YbaB-like domain"/>
    <property type="match status" value="1"/>
</dbReference>
<dbReference type="HAMAP" id="MF_00274">
    <property type="entry name" value="DNA_YbaB_EbfC"/>
    <property type="match status" value="1"/>
</dbReference>
<dbReference type="InterPro" id="IPR036894">
    <property type="entry name" value="YbaB-like_sf"/>
</dbReference>
<dbReference type="InterPro" id="IPR004401">
    <property type="entry name" value="YbaB/EbfC"/>
</dbReference>
<dbReference type="NCBIfam" id="TIGR00103">
    <property type="entry name" value="DNA_YbaB_EbfC"/>
    <property type="match status" value="1"/>
</dbReference>
<dbReference type="PANTHER" id="PTHR33449">
    <property type="entry name" value="NUCLEOID-ASSOCIATED PROTEIN YBAB"/>
    <property type="match status" value="1"/>
</dbReference>
<dbReference type="PANTHER" id="PTHR33449:SF1">
    <property type="entry name" value="NUCLEOID-ASSOCIATED PROTEIN YBAB"/>
    <property type="match status" value="1"/>
</dbReference>
<dbReference type="Pfam" id="PF02575">
    <property type="entry name" value="YbaB_DNA_bd"/>
    <property type="match status" value="1"/>
</dbReference>
<dbReference type="PIRSF" id="PIRSF004555">
    <property type="entry name" value="UCP004555"/>
    <property type="match status" value="1"/>
</dbReference>
<dbReference type="SUPFAM" id="SSF82607">
    <property type="entry name" value="YbaB-like"/>
    <property type="match status" value="1"/>
</dbReference>
<name>Y052_PELTS</name>
<protein>
    <recommendedName>
        <fullName evidence="1">Nucleoid-associated protein PTH_0052</fullName>
    </recommendedName>
</protein>
<gene>
    <name type="ordered locus">PTH_0052</name>
</gene>